<name>RUVB_FRACC</name>
<keyword id="KW-0067">ATP-binding</keyword>
<keyword id="KW-0963">Cytoplasm</keyword>
<keyword id="KW-0227">DNA damage</keyword>
<keyword id="KW-0233">DNA recombination</keyword>
<keyword id="KW-0234">DNA repair</keyword>
<keyword id="KW-0238">DNA-binding</keyword>
<keyword id="KW-0378">Hydrolase</keyword>
<keyword id="KW-0547">Nucleotide-binding</keyword>
<keyword id="KW-1185">Reference proteome</keyword>
<feature type="chain" id="PRO_0000322795" description="Holliday junction branch migration complex subunit RuvB">
    <location>
        <begin position="1"/>
        <end position="348"/>
    </location>
</feature>
<feature type="region of interest" description="Large ATPase domain (RuvB-L)" evidence="1">
    <location>
        <begin position="3"/>
        <end position="183"/>
    </location>
</feature>
<feature type="region of interest" description="Small ATPAse domain (RuvB-S)" evidence="1">
    <location>
        <begin position="184"/>
        <end position="254"/>
    </location>
</feature>
<feature type="region of interest" description="Head domain (RuvB-H)" evidence="1">
    <location>
        <begin position="257"/>
        <end position="348"/>
    </location>
</feature>
<feature type="binding site" evidence="1">
    <location>
        <position position="22"/>
    </location>
    <ligand>
        <name>ATP</name>
        <dbReference type="ChEBI" id="CHEBI:30616"/>
    </ligand>
</feature>
<feature type="binding site" evidence="1">
    <location>
        <position position="23"/>
    </location>
    <ligand>
        <name>ATP</name>
        <dbReference type="ChEBI" id="CHEBI:30616"/>
    </ligand>
</feature>
<feature type="binding site" evidence="1">
    <location>
        <position position="64"/>
    </location>
    <ligand>
        <name>ATP</name>
        <dbReference type="ChEBI" id="CHEBI:30616"/>
    </ligand>
</feature>
<feature type="binding site" evidence="1">
    <location>
        <position position="67"/>
    </location>
    <ligand>
        <name>ATP</name>
        <dbReference type="ChEBI" id="CHEBI:30616"/>
    </ligand>
</feature>
<feature type="binding site" evidence="1">
    <location>
        <position position="68"/>
    </location>
    <ligand>
        <name>ATP</name>
        <dbReference type="ChEBI" id="CHEBI:30616"/>
    </ligand>
</feature>
<feature type="binding site" evidence="1">
    <location>
        <position position="68"/>
    </location>
    <ligand>
        <name>Mg(2+)</name>
        <dbReference type="ChEBI" id="CHEBI:18420"/>
    </ligand>
</feature>
<feature type="binding site" evidence="1">
    <location>
        <position position="69"/>
    </location>
    <ligand>
        <name>ATP</name>
        <dbReference type="ChEBI" id="CHEBI:30616"/>
    </ligand>
</feature>
<feature type="binding site" evidence="1">
    <location>
        <begin position="130"/>
        <end position="132"/>
    </location>
    <ligand>
        <name>ATP</name>
        <dbReference type="ChEBI" id="CHEBI:30616"/>
    </ligand>
</feature>
<feature type="binding site" evidence="1">
    <location>
        <position position="173"/>
    </location>
    <ligand>
        <name>ATP</name>
        <dbReference type="ChEBI" id="CHEBI:30616"/>
    </ligand>
</feature>
<feature type="binding site" evidence="1">
    <location>
        <position position="183"/>
    </location>
    <ligand>
        <name>ATP</name>
        <dbReference type="ChEBI" id="CHEBI:30616"/>
    </ligand>
</feature>
<feature type="binding site" evidence="1">
    <location>
        <position position="220"/>
    </location>
    <ligand>
        <name>ATP</name>
        <dbReference type="ChEBI" id="CHEBI:30616"/>
    </ligand>
</feature>
<feature type="binding site" evidence="1">
    <location>
        <position position="312"/>
    </location>
    <ligand>
        <name>DNA</name>
        <dbReference type="ChEBI" id="CHEBI:16991"/>
    </ligand>
</feature>
<feature type="binding site" evidence="1">
    <location>
        <position position="317"/>
    </location>
    <ligand>
        <name>DNA</name>
        <dbReference type="ChEBI" id="CHEBI:16991"/>
    </ligand>
</feature>
<dbReference type="EC" id="3.6.4.-" evidence="1"/>
<dbReference type="EMBL" id="CP000249">
    <property type="protein sequence ID" value="ABD10748.1"/>
    <property type="molecule type" value="Genomic_DNA"/>
</dbReference>
<dbReference type="RefSeq" id="WP_011435813.1">
    <property type="nucleotide sequence ID" value="NZ_JENI01000007.1"/>
</dbReference>
<dbReference type="SMR" id="Q2JD94"/>
<dbReference type="STRING" id="106370.Francci3_1371"/>
<dbReference type="KEGG" id="fra:Francci3_1371"/>
<dbReference type="eggNOG" id="COG2255">
    <property type="taxonomic scope" value="Bacteria"/>
</dbReference>
<dbReference type="HOGENOM" id="CLU_055599_1_0_11"/>
<dbReference type="OrthoDB" id="9804478at2"/>
<dbReference type="PhylomeDB" id="Q2JD94"/>
<dbReference type="Proteomes" id="UP000001937">
    <property type="component" value="Chromosome"/>
</dbReference>
<dbReference type="GO" id="GO:0005737">
    <property type="term" value="C:cytoplasm"/>
    <property type="evidence" value="ECO:0007669"/>
    <property type="project" value="UniProtKB-SubCell"/>
</dbReference>
<dbReference type="GO" id="GO:0048476">
    <property type="term" value="C:Holliday junction resolvase complex"/>
    <property type="evidence" value="ECO:0007669"/>
    <property type="project" value="UniProtKB-UniRule"/>
</dbReference>
<dbReference type="GO" id="GO:0005524">
    <property type="term" value="F:ATP binding"/>
    <property type="evidence" value="ECO:0007669"/>
    <property type="project" value="UniProtKB-UniRule"/>
</dbReference>
<dbReference type="GO" id="GO:0016887">
    <property type="term" value="F:ATP hydrolysis activity"/>
    <property type="evidence" value="ECO:0007669"/>
    <property type="project" value="InterPro"/>
</dbReference>
<dbReference type="GO" id="GO:0000400">
    <property type="term" value="F:four-way junction DNA binding"/>
    <property type="evidence" value="ECO:0007669"/>
    <property type="project" value="UniProtKB-UniRule"/>
</dbReference>
<dbReference type="GO" id="GO:0009378">
    <property type="term" value="F:four-way junction helicase activity"/>
    <property type="evidence" value="ECO:0007669"/>
    <property type="project" value="InterPro"/>
</dbReference>
<dbReference type="GO" id="GO:0006310">
    <property type="term" value="P:DNA recombination"/>
    <property type="evidence" value="ECO:0007669"/>
    <property type="project" value="UniProtKB-UniRule"/>
</dbReference>
<dbReference type="GO" id="GO:0006281">
    <property type="term" value="P:DNA repair"/>
    <property type="evidence" value="ECO:0007669"/>
    <property type="project" value="UniProtKB-UniRule"/>
</dbReference>
<dbReference type="CDD" id="cd00009">
    <property type="entry name" value="AAA"/>
    <property type="match status" value="1"/>
</dbReference>
<dbReference type="Gene3D" id="1.10.8.60">
    <property type="match status" value="1"/>
</dbReference>
<dbReference type="Gene3D" id="3.40.50.300">
    <property type="entry name" value="P-loop containing nucleotide triphosphate hydrolases"/>
    <property type="match status" value="1"/>
</dbReference>
<dbReference type="Gene3D" id="1.10.10.10">
    <property type="entry name" value="Winged helix-like DNA-binding domain superfamily/Winged helix DNA-binding domain"/>
    <property type="match status" value="1"/>
</dbReference>
<dbReference type="HAMAP" id="MF_00016">
    <property type="entry name" value="DNA_HJ_migration_RuvB"/>
    <property type="match status" value="1"/>
</dbReference>
<dbReference type="InterPro" id="IPR003593">
    <property type="entry name" value="AAA+_ATPase"/>
</dbReference>
<dbReference type="InterPro" id="IPR041445">
    <property type="entry name" value="AAA_lid_4"/>
</dbReference>
<dbReference type="InterPro" id="IPR004605">
    <property type="entry name" value="DNA_helicase_Holl-junc_RuvB"/>
</dbReference>
<dbReference type="InterPro" id="IPR027417">
    <property type="entry name" value="P-loop_NTPase"/>
</dbReference>
<dbReference type="InterPro" id="IPR008824">
    <property type="entry name" value="RuvB-like_N"/>
</dbReference>
<dbReference type="InterPro" id="IPR008823">
    <property type="entry name" value="RuvB_C"/>
</dbReference>
<dbReference type="InterPro" id="IPR036388">
    <property type="entry name" value="WH-like_DNA-bd_sf"/>
</dbReference>
<dbReference type="InterPro" id="IPR036390">
    <property type="entry name" value="WH_DNA-bd_sf"/>
</dbReference>
<dbReference type="NCBIfam" id="NF000868">
    <property type="entry name" value="PRK00080.1"/>
    <property type="match status" value="1"/>
</dbReference>
<dbReference type="NCBIfam" id="TIGR00635">
    <property type="entry name" value="ruvB"/>
    <property type="match status" value="1"/>
</dbReference>
<dbReference type="PANTHER" id="PTHR42848">
    <property type="match status" value="1"/>
</dbReference>
<dbReference type="PANTHER" id="PTHR42848:SF1">
    <property type="entry name" value="HOLLIDAY JUNCTION BRANCH MIGRATION COMPLEX SUBUNIT RUVB"/>
    <property type="match status" value="1"/>
</dbReference>
<dbReference type="Pfam" id="PF17864">
    <property type="entry name" value="AAA_lid_4"/>
    <property type="match status" value="1"/>
</dbReference>
<dbReference type="Pfam" id="PF05491">
    <property type="entry name" value="RuvB_C"/>
    <property type="match status" value="1"/>
</dbReference>
<dbReference type="Pfam" id="PF05496">
    <property type="entry name" value="RuvB_N"/>
    <property type="match status" value="1"/>
</dbReference>
<dbReference type="SMART" id="SM00382">
    <property type="entry name" value="AAA"/>
    <property type="match status" value="1"/>
</dbReference>
<dbReference type="SUPFAM" id="SSF52540">
    <property type="entry name" value="P-loop containing nucleoside triphosphate hydrolases"/>
    <property type="match status" value="1"/>
</dbReference>
<dbReference type="SUPFAM" id="SSF46785">
    <property type="entry name" value="Winged helix' DNA-binding domain"/>
    <property type="match status" value="1"/>
</dbReference>
<accession>Q2JD94</accession>
<reference key="1">
    <citation type="journal article" date="2007" name="Genome Res.">
        <title>Genome characteristics of facultatively symbiotic Frankia sp. strains reflect host range and host plant biogeography.</title>
        <authorList>
            <person name="Normand P."/>
            <person name="Lapierre P."/>
            <person name="Tisa L.S."/>
            <person name="Gogarten J.P."/>
            <person name="Alloisio N."/>
            <person name="Bagnarol E."/>
            <person name="Bassi C.A."/>
            <person name="Berry A.M."/>
            <person name="Bickhart D.M."/>
            <person name="Choisne N."/>
            <person name="Couloux A."/>
            <person name="Cournoyer B."/>
            <person name="Cruveiller S."/>
            <person name="Daubin V."/>
            <person name="Demange N."/>
            <person name="Francino M.P."/>
            <person name="Goltsman E."/>
            <person name="Huang Y."/>
            <person name="Kopp O.R."/>
            <person name="Labarre L."/>
            <person name="Lapidus A."/>
            <person name="Lavire C."/>
            <person name="Marechal J."/>
            <person name="Martinez M."/>
            <person name="Mastronunzio J.E."/>
            <person name="Mullin B.C."/>
            <person name="Niemann J."/>
            <person name="Pujic P."/>
            <person name="Rawnsley T."/>
            <person name="Rouy Z."/>
            <person name="Schenowitz C."/>
            <person name="Sellstedt A."/>
            <person name="Tavares F."/>
            <person name="Tomkins J.P."/>
            <person name="Vallenet D."/>
            <person name="Valverde C."/>
            <person name="Wall L.G."/>
            <person name="Wang Y."/>
            <person name="Medigue C."/>
            <person name="Benson D.R."/>
        </authorList>
    </citation>
    <scope>NUCLEOTIDE SEQUENCE [LARGE SCALE GENOMIC DNA]</scope>
    <source>
        <strain>DSM 45818 / CECT 9043 / HFP020203 / CcI3</strain>
    </source>
</reference>
<protein>
    <recommendedName>
        <fullName evidence="1">Holliday junction branch migration complex subunit RuvB</fullName>
        <ecNumber evidence="1">3.6.4.-</ecNumber>
    </recommendedName>
</protein>
<organism>
    <name type="scientific">Frankia casuarinae (strain DSM 45818 / CECT 9043 / HFP020203 / CcI3)</name>
    <dbReference type="NCBI Taxonomy" id="106370"/>
    <lineage>
        <taxon>Bacteria</taxon>
        <taxon>Bacillati</taxon>
        <taxon>Actinomycetota</taxon>
        <taxon>Actinomycetes</taxon>
        <taxon>Frankiales</taxon>
        <taxon>Frankiaceae</taxon>
        <taxon>Frankia</taxon>
    </lineage>
</organism>
<evidence type="ECO:0000255" key="1">
    <source>
        <dbReference type="HAMAP-Rule" id="MF_00016"/>
    </source>
</evidence>
<comment type="function">
    <text evidence="1">The RuvA-RuvB-RuvC complex processes Holliday junction (HJ) DNA during genetic recombination and DNA repair, while the RuvA-RuvB complex plays an important role in the rescue of blocked DNA replication forks via replication fork reversal (RFR). RuvA specifically binds to HJ cruciform DNA, conferring on it an open structure. The RuvB hexamer acts as an ATP-dependent pump, pulling dsDNA into and through the RuvAB complex. RuvB forms 2 homohexamers on either side of HJ DNA bound by 1 or 2 RuvA tetramers; 4 subunits per hexamer contact DNA at a time. Coordinated motions by a converter formed by DNA-disengaged RuvB subunits stimulates ATP hydrolysis and nucleotide exchange. Immobilization of the converter enables RuvB to convert the ATP-contained energy into a lever motion, pulling 2 nucleotides of DNA out of the RuvA tetramer per ATP hydrolyzed, thus driving DNA branch migration. The RuvB motors rotate together with the DNA substrate, which together with the progressing nucleotide cycle form the mechanistic basis for DNA recombination by continuous HJ branch migration. Branch migration allows RuvC to scan DNA until it finds its consensus sequence, where it cleaves and resolves cruciform DNA.</text>
</comment>
<comment type="catalytic activity">
    <reaction evidence="1">
        <text>ATP + H2O = ADP + phosphate + H(+)</text>
        <dbReference type="Rhea" id="RHEA:13065"/>
        <dbReference type="ChEBI" id="CHEBI:15377"/>
        <dbReference type="ChEBI" id="CHEBI:15378"/>
        <dbReference type="ChEBI" id="CHEBI:30616"/>
        <dbReference type="ChEBI" id="CHEBI:43474"/>
        <dbReference type="ChEBI" id="CHEBI:456216"/>
    </reaction>
</comment>
<comment type="subunit">
    <text evidence="1">Homohexamer. Forms an RuvA(8)-RuvB(12)-Holliday junction (HJ) complex. HJ DNA is sandwiched between 2 RuvA tetramers; dsDNA enters through RuvA and exits via RuvB. An RuvB hexamer assembles on each DNA strand where it exits the tetramer. Each RuvB hexamer is contacted by two RuvA subunits (via domain III) on 2 adjacent RuvB subunits; this complex drives branch migration. In the full resolvosome a probable DNA-RuvA(4)-RuvB(12)-RuvC(2) complex forms which resolves the HJ.</text>
</comment>
<comment type="subcellular location">
    <subcellularLocation>
        <location evidence="1">Cytoplasm</location>
    </subcellularLocation>
</comment>
<comment type="domain">
    <text evidence="1">Has 3 domains, the large (RuvB-L) and small ATPase (RuvB-S) domains and the C-terminal head (RuvB-H) domain. The head domain binds DNA, while the ATPase domains jointly bind ATP, ADP or are empty depending on the state of the subunit in the translocation cycle. During a single DNA translocation step the structure of each domain remains the same, but their relative positions change.</text>
</comment>
<comment type="similarity">
    <text evidence="1">Belongs to the RuvB family.</text>
</comment>
<proteinExistence type="inferred from homology"/>
<sequence>MSDDGLVSAAASPEERAFEAGLRPRTLAEFVGQRKVREQLTIMLEGARARGRPPDHVLLSGPPGLGKTSLAMIMAQELEVPLRMTSGPAIERAGDLVAILTALSPGEVLFLDEIHRIARPAEELLYAAMEDFRVDVILGKGPGATAIPLDVSPFTLVGATTRSGLLTGPLRDRFGFTAHLDFYDADELARVLTRSAGLLGVTLTAEGAAEVAGRSRGTPRIANRLLRRVRDYAEVRADGVVTREIAQAALRIYDVDGLGLDRLDRAVLEALVTRFGGGPVGLTTLAVSVGEEPETVEDVAEPFLLRAGLLIRTARGRMATPAAFEHLGLDPVTDPLGRTQVSLFTEGE</sequence>
<gene>
    <name evidence="1" type="primary">ruvB</name>
    <name type="ordered locus">Francci3_1371</name>
</gene>